<organism evidence="3">
    <name type="scientific">Cairina moschata</name>
    <name type="common">Muscovy duck</name>
    <dbReference type="NCBI Taxonomy" id="8855"/>
    <lineage>
        <taxon>Eukaryota</taxon>
        <taxon>Metazoa</taxon>
        <taxon>Chordata</taxon>
        <taxon>Craniata</taxon>
        <taxon>Vertebrata</taxon>
        <taxon>Euteleostomi</taxon>
        <taxon>Archelosauria</taxon>
        <taxon>Archosauria</taxon>
        <taxon>Dinosauria</taxon>
        <taxon>Saurischia</taxon>
        <taxon>Theropoda</taxon>
        <taxon>Coelurosauria</taxon>
        <taxon>Aves</taxon>
        <taxon>Neognathae</taxon>
        <taxon>Galloanserae</taxon>
        <taxon>Anseriformes</taxon>
        <taxon>Anatidae</taxon>
        <taxon>Anatinae</taxon>
        <taxon>Cairina</taxon>
    </lineage>
</organism>
<comment type="function">
    <text evidence="2 3">Inhibits chymotrypsin.</text>
</comment>
<comment type="subunit">
    <text evidence="2">Monomer.</text>
</comment>
<comment type="subcellular location">
    <subcellularLocation>
        <location>Secreted</location>
    </subcellularLocation>
</comment>
<comment type="mass spectrometry"/>
<name>ICHY_CAIMO</name>
<feature type="chain" id="PRO_0000073031" description="Chymotrypsin inhibitor">
    <location>
        <begin position="1"/>
        <end position="65"/>
    </location>
</feature>
<feature type="domain" description="Kazal-like" evidence="1">
    <location>
        <begin position="7"/>
        <end position="64"/>
    </location>
</feature>
<feature type="site" description="Reactive bond" evidence="1">
    <location>
        <begin position="24"/>
        <end position="25"/>
    </location>
</feature>
<feature type="disulfide bond" evidence="1">
    <location>
        <begin position="13"/>
        <end position="44"/>
    </location>
</feature>
<feature type="disulfide bond" evidence="1">
    <location>
        <begin position="22"/>
        <end position="41"/>
    </location>
</feature>
<feature type="disulfide bond" evidence="1">
    <location>
        <begin position="30"/>
        <end position="62"/>
    </location>
</feature>
<accession>P83039</accession>
<reference key="1">
    <citation type="journal article" date="2002" name="Comp. Biochem. Physiol.">
        <title>Kazal-type chymotrypsin inhibitor from duck pancreas.</title>
        <authorList>
            <person name="Wilimowska-Pelc A."/>
            <person name="Olichwier Z."/>
            <person name="Mazurkiewicz A."/>
            <person name="Kowalska J."/>
            <person name="Wilusz T."/>
        </authorList>
    </citation>
    <scope>PROTEIN SEQUENCE</scope>
    <scope>FUNCTION</scope>
    <scope>SUBUNIT</scope>
    <scope>MASS SPECTROMETRY</scope>
    <source>
        <tissue>Pancreas</tissue>
    </source>
</reference>
<keyword id="KW-0903">Direct protein sequencing</keyword>
<keyword id="KW-1015">Disulfide bond</keyword>
<keyword id="KW-0646">Protease inhibitor</keyword>
<keyword id="KW-1185">Reference proteome</keyword>
<keyword id="KW-0964">Secreted</keyword>
<keyword id="KW-0722">Serine protease inhibitor</keyword>
<proteinExistence type="evidence at protein level"/>
<protein>
    <recommendedName>
        <fullName>Chymotrypsin inhibitor</fullName>
    </recommendedName>
    <alternativeName>
        <fullName>DPCI</fullName>
    </alternativeName>
</protein>
<evidence type="ECO:0000255" key="1">
    <source>
        <dbReference type="PROSITE-ProRule" id="PRU00798"/>
    </source>
</evidence>
<evidence type="ECO:0000269" key="2">
    <source>
    </source>
</evidence>
<evidence type="ECO:0000305" key="3"/>
<dbReference type="SMR" id="P83039"/>
<dbReference type="MEROPS" id="I01.970"/>
<dbReference type="Ensembl" id="ENSCMMT00000014843.1">
    <property type="protein sequence ID" value="ENSCMMP00000013466.1"/>
    <property type="gene ID" value="ENSCMMG00000008571.1"/>
</dbReference>
<dbReference type="Proteomes" id="UP000694556">
    <property type="component" value="Chromosome Z"/>
</dbReference>
<dbReference type="GO" id="GO:0005576">
    <property type="term" value="C:extracellular region"/>
    <property type="evidence" value="ECO:0007669"/>
    <property type="project" value="UniProtKB-SubCell"/>
</dbReference>
<dbReference type="GO" id="GO:0004867">
    <property type="term" value="F:serine-type endopeptidase inhibitor activity"/>
    <property type="evidence" value="ECO:0007669"/>
    <property type="project" value="UniProtKB-KW"/>
</dbReference>
<dbReference type="CDD" id="cd01327">
    <property type="entry name" value="KAZAL_PSTI"/>
    <property type="match status" value="1"/>
</dbReference>
<dbReference type="Gene3D" id="3.30.60.30">
    <property type="match status" value="1"/>
</dbReference>
<dbReference type="InterPro" id="IPR002350">
    <property type="entry name" value="Kazal_dom"/>
</dbReference>
<dbReference type="InterPro" id="IPR036058">
    <property type="entry name" value="Kazal_dom_sf"/>
</dbReference>
<dbReference type="PANTHER" id="PTHR21312:SF28">
    <property type="entry name" value="OVOINHIBITOR-RELATED"/>
    <property type="match status" value="1"/>
</dbReference>
<dbReference type="PANTHER" id="PTHR21312">
    <property type="entry name" value="SERINE PROTEASE INHIBITOR"/>
    <property type="match status" value="1"/>
</dbReference>
<dbReference type="Pfam" id="PF00050">
    <property type="entry name" value="Kazal_1"/>
    <property type="match status" value="1"/>
</dbReference>
<dbReference type="SMART" id="SM00280">
    <property type="entry name" value="KAZAL"/>
    <property type="match status" value="1"/>
</dbReference>
<dbReference type="SUPFAM" id="SSF100895">
    <property type="entry name" value="Kazal-type serine protease inhibitors"/>
    <property type="match status" value="1"/>
</dbReference>
<dbReference type="PROSITE" id="PS00282">
    <property type="entry name" value="KAZAL_1"/>
    <property type="match status" value="1"/>
</dbReference>
<dbReference type="PROSITE" id="PS51465">
    <property type="entry name" value="KAZAL_2"/>
    <property type="match status" value="1"/>
</dbReference>
<sequence>ELDEGNGLRRPVCGEMAELLACPLVNLPVCGTDGNTYANECLLCVQKMKTRQDIRILNNGRCRDT</sequence>